<name>LCMT1_MYCMD</name>
<comment type="function">
    <text evidence="1">Methylates the carboxyl group of the C-terminal leucine residue of protein phosphatase 2A catalytic subunits to form alpha-leucine ester residues.</text>
</comment>
<comment type="catalytic activity">
    <reaction>
        <text>[phosphatase 2A protein]-C-terminal L-leucine + S-adenosyl-L-methionine = [phosphatase 2A protein]-C-terminal L-leucine methyl ester + S-adenosyl-L-homocysteine</text>
        <dbReference type="Rhea" id="RHEA:48544"/>
        <dbReference type="Rhea" id="RHEA-COMP:12134"/>
        <dbReference type="Rhea" id="RHEA-COMP:12135"/>
        <dbReference type="ChEBI" id="CHEBI:57856"/>
        <dbReference type="ChEBI" id="CHEBI:59789"/>
        <dbReference type="ChEBI" id="CHEBI:90516"/>
        <dbReference type="ChEBI" id="CHEBI:90517"/>
        <dbReference type="EC" id="2.1.1.233"/>
    </reaction>
</comment>
<comment type="similarity">
    <text evidence="3">Belongs to the methyltransferase superfamily. LCMT family.</text>
</comment>
<evidence type="ECO:0000250" key="1"/>
<evidence type="ECO:0000256" key="2">
    <source>
        <dbReference type="SAM" id="MobiDB-lite"/>
    </source>
</evidence>
<evidence type="ECO:0000305" key="3"/>
<feature type="chain" id="PRO_0000226133" description="Leucine carboxyl methyltransferase 1">
    <location>
        <begin position="1"/>
        <end position="520"/>
    </location>
</feature>
<feature type="region of interest" description="Disordered" evidence="2">
    <location>
        <begin position="1"/>
        <end position="116"/>
    </location>
</feature>
<feature type="region of interest" description="Disordered" evidence="2">
    <location>
        <begin position="142"/>
        <end position="174"/>
    </location>
</feature>
<feature type="compositionally biased region" description="Low complexity" evidence="2">
    <location>
        <begin position="79"/>
        <end position="89"/>
    </location>
</feature>
<feature type="compositionally biased region" description="Polar residues" evidence="2">
    <location>
        <begin position="95"/>
        <end position="110"/>
    </location>
</feature>
<feature type="compositionally biased region" description="Polar residues" evidence="2">
    <location>
        <begin position="142"/>
        <end position="151"/>
    </location>
</feature>
<feature type="binding site" evidence="1">
    <location>
        <position position="185"/>
    </location>
    <ligand>
        <name>S-adenosyl-L-methionine</name>
        <dbReference type="ChEBI" id="CHEBI:59789"/>
    </ligand>
</feature>
<feature type="binding site" evidence="1">
    <location>
        <position position="210"/>
    </location>
    <ligand>
        <name>S-adenosyl-L-methionine</name>
        <dbReference type="ChEBI" id="CHEBI:59789"/>
    </ligand>
</feature>
<feature type="binding site" evidence="1">
    <location>
        <position position="237"/>
    </location>
    <ligand>
        <name>S-adenosyl-L-methionine</name>
        <dbReference type="ChEBI" id="CHEBI:59789"/>
    </ligand>
</feature>
<feature type="binding site" evidence="1">
    <location>
        <begin position="305"/>
        <end position="306"/>
    </location>
    <ligand>
        <name>S-adenosyl-L-methionine</name>
        <dbReference type="ChEBI" id="CHEBI:59789"/>
    </ligand>
</feature>
<feature type="binding site" evidence="1">
    <location>
        <position position="343"/>
    </location>
    <ligand>
        <name>S-adenosyl-L-methionine</name>
        <dbReference type="ChEBI" id="CHEBI:59789"/>
    </ligand>
</feature>
<keyword id="KW-0489">Methyltransferase</keyword>
<keyword id="KW-1185">Reference proteome</keyword>
<keyword id="KW-0949">S-adenosyl-L-methionine</keyword>
<keyword id="KW-0808">Transferase</keyword>
<organism>
    <name type="scientific">Mycosarcoma maydis</name>
    <name type="common">Corn smut fungus</name>
    <name type="synonym">Ustilago maydis</name>
    <dbReference type="NCBI Taxonomy" id="5270"/>
    <lineage>
        <taxon>Eukaryota</taxon>
        <taxon>Fungi</taxon>
        <taxon>Dikarya</taxon>
        <taxon>Basidiomycota</taxon>
        <taxon>Ustilaginomycotina</taxon>
        <taxon>Ustilaginomycetes</taxon>
        <taxon>Ustilaginales</taxon>
        <taxon>Ustilaginaceae</taxon>
        <taxon>Mycosarcoma</taxon>
    </lineage>
</organism>
<sequence length="520" mass="56802">MQRDTSLRDPFATEDESSASEIGRAPERRLRIPQNQLRNADERCEIRSPQPVPGPGLPRSIAVRTETAATSKDAPAPAPSLRLSLGLPRSRTKAHSGQTSDATNITSTARQADDAVRNTDSDALLSRLSALKLGYLPSEPFTQEFSSTLPSNGGHPTGRSGFPQPHHPGSSIRRSPLINIGTYLRCSTIDAEVESFLRQGCEQKQIISVGAGSDSRYWRIMADTDLSRRLHHYVEIDFEENTSQKLSRILKSPILRASLDTNSSVYGVPLSHLSQFSLGVPCHTGSESRQFDVIRSSKYSLLAADVRSLHPDTPSAERIDLEHLLGPASTGLDSTLPTLILFECVLAYIAPDRADWLIRHLGQRFAAVQALSYDIALAGDAHPSAKAVACVSSESESSECGQTVGTADSAISTSTTVASPAPPSRFGRVMLQNLEMRKLSLPGARAYPTIHAQSQRFAQAWSDSQALQIETSGRSLFSIWSDLGAEQRSRLSRLEGLDEVEEIDMLLQHYCIVQARRQRP</sequence>
<gene>
    <name type="primary">PPM1</name>
    <name type="ORF">UMAG_12293</name>
</gene>
<reference key="1">
    <citation type="journal article" date="2006" name="Nature">
        <title>Insights from the genome of the biotrophic fungal plant pathogen Ustilago maydis.</title>
        <authorList>
            <person name="Kaemper J."/>
            <person name="Kahmann R."/>
            <person name="Boelker M."/>
            <person name="Ma L.-J."/>
            <person name="Brefort T."/>
            <person name="Saville B.J."/>
            <person name="Banuett F."/>
            <person name="Kronstad J.W."/>
            <person name="Gold S.E."/>
            <person name="Mueller O."/>
            <person name="Perlin M.H."/>
            <person name="Woesten H.A.B."/>
            <person name="de Vries R."/>
            <person name="Ruiz-Herrera J."/>
            <person name="Reynaga-Pena C.G."/>
            <person name="Snetselaar K."/>
            <person name="McCann M."/>
            <person name="Perez-Martin J."/>
            <person name="Feldbruegge M."/>
            <person name="Basse C.W."/>
            <person name="Steinberg G."/>
            <person name="Ibeas J.I."/>
            <person name="Holloman W."/>
            <person name="Guzman P."/>
            <person name="Farman M.L."/>
            <person name="Stajich J.E."/>
            <person name="Sentandreu R."/>
            <person name="Gonzalez-Prieto J.M."/>
            <person name="Kennell J.C."/>
            <person name="Molina L."/>
            <person name="Schirawski J."/>
            <person name="Mendoza-Mendoza A."/>
            <person name="Greilinger D."/>
            <person name="Muench K."/>
            <person name="Roessel N."/>
            <person name="Scherer M."/>
            <person name="Vranes M."/>
            <person name="Ladendorf O."/>
            <person name="Vincon V."/>
            <person name="Fuchs U."/>
            <person name="Sandrock B."/>
            <person name="Meng S."/>
            <person name="Ho E.C.H."/>
            <person name="Cahill M.J."/>
            <person name="Boyce K.J."/>
            <person name="Klose J."/>
            <person name="Klosterman S.J."/>
            <person name="Deelstra H.J."/>
            <person name="Ortiz-Castellanos L."/>
            <person name="Li W."/>
            <person name="Sanchez-Alonso P."/>
            <person name="Schreier P.H."/>
            <person name="Haeuser-Hahn I."/>
            <person name="Vaupel M."/>
            <person name="Koopmann E."/>
            <person name="Friedrich G."/>
            <person name="Voss H."/>
            <person name="Schlueter T."/>
            <person name="Margolis J."/>
            <person name="Platt D."/>
            <person name="Swimmer C."/>
            <person name="Gnirke A."/>
            <person name="Chen F."/>
            <person name="Vysotskaia V."/>
            <person name="Mannhaupt G."/>
            <person name="Gueldener U."/>
            <person name="Muensterkoetter M."/>
            <person name="Haase D."/>
            <person name="Oesterheld M."/>
            <person name="Mewes H.-W."/>
            <person name="Mauceli E.W."/>
            <person name="DeCaprio D."/>
            <person name="Wade C.M."/>
            <person name="Butler J."/>
            <person name="Young S.K."/>
            <person name="Jaffe D.B."/>
            <person name="Calvo S.E."/>
            <person name="Nusbaum C."/>
            <person name="Galagan J.E."/>
            <person name="Birren B.W."/>
        </authorList>
    </citation>
    <scope>NUCLEOTIDE SEQUENCE [LARGE SCALE GENOMIC DNA]</scope>
    <source>
        <strain>DSM 14603 / FGSC 9021 / UM521</strain>
    </source>
</reference>
<reference key="2">
    <citation type="submission" date="2014-09" db="EMBL/GenBank/DDBJ databases">
        <authorList>
            <person name="Gueldener U."/>
            <person name="Muensterkoetter M."/>
            <person name="Walter M.C."/>
            <person name="Mannhaupt G."/>
            <person name="Kahmann R."/>
        </authorList>
    </citation>
    <scope>GENOME REANNOTATION</scope>
    <source>
        <strain>DSM 14603 / FGSC 9021 / UM521</strain>
    </source>
</reference>
<proteinExistence type="inferred from homology"/>
<accession>Q4P4G2</accession>
<accession>A0A0D1CJU3</accession>
<protein>
    <recommendedName>
        <fullName>Leucine carboxyl methyltransferase 1</fullName>
        <ecNumber>2.1.1.233</ecNumber>
    </recommendedName>
    <alternativeName>
        <fullName>Protein phosphatase methyltransferase 1</fullName>
    </alternativeName>
    <alternativeName>
        <fullName>[Phosphatase 2A protein]-leucine-carboxy methyltransferase 1</fullName>
    </alternativeName>
</protein>
<dbReference type="EC" id="2.1.1.233"/>
<dbReference type="EMBL" id="CM003154">
    <property type="protein sequence ID" value="KIS67133.1"/>
    <property type="molecule type" value="Genomic_DNA"/>
</dbReference>
<dbReference type="RefSeq" id="XP_011391394.1">
    <property type="nucleotide sequence ID" value="XM_011393092.1"/>
</dbReference>
<dbReference type="SMR" id="Q4P4G2"/>
<dbReference type="FunCoup" id="Q4P4G2">
    <property type="interactions" value="303"/>
</dbReference>
<dbReference type="STRING" id="237631.Q4P4G2"/>
<dbReference type="EnsemblFungi" id="KIS67133">
    <property type="protein sequence ID" value="KIS67133"/>
    <property type="gene ID" value="UMAG_12293"/>
</dbReference>
<dbReference type="GeneID" id="23568038"/>
<dbReference type="KEGG" id="uma:UMAG_12293"/>
<dbReference type="VEuPathDB" id="FungiDB:UMAG_12293"/>
<dbReference type="eggNOG" id="KOG2918">
    <property type="taxonomic scope" value="Eukaryota"/>
</dbReference>
<dbReference type="HOGENOM" id="CLU_031312_2_0_1"/>
<dbReference type="InParanoid" id="Q4P4G2"/>
<dbReference type="OrthoDB" id="203237at2759"/>
<dbReference type="Proteomes" id="UP000000561">
    <property type="component" value="Chromosome 15"/>
</dbReference>
<dbReference type="GO" id="GO:0018423">
    <property type="term" value="F:protein C-terminal leucine carboxyl O-methyltransferase activity"/>
    <property type="evidence" value="ECO:0000318"/>
    <property type="project" value="GO_Central"/>
</dbReference>
<dbReference type="GO" id="GO:0032259">
    <property type="term" value="P:methylation"/>
    <property type="evidence" value="ECO:0007669"/>
    <property type="project" value="UniProtKB-KW"/>
</dbReference>
<dbReference type="Gene3D" id="3.40.50.150">
    <property type="entry name" value="Vaccinia Virus protein VP39"/>
    <property type="match status" value="1"/>
</dbReference>
<dbReference type="InterPro" id="IPR016651">
    <property type="entry name" value="LCMT1"/>
</dbReference>
<dbReference type="InterPro" id="IPR007213">
    <property type="entry name" value="Ppm1/Ppm2/Tcmp"/>
</dbReference>
<dbReference type="InterPro" id="IPR029063">
    <property type="entry name" value="SAM-dependent_MTases_sf"/>
</dbReference>
<dbReference type="PANTHER" id="PTHR13600">
    <property type="entry name" value="LEUCINE CARBOXYL METHYLTRANSFERASE"/>
    <property type="match status" value="1"/>
</dbReference>
<dbReference type="PANTHER" id="PTHR13600:SF21">
    <property type="entry name" value="LEUCINE CARBOXYL METHYLTRANSFERASE 1"/>
    <property type="match status" value="1"/>
</dbReference>
<dbReference type="Pfam" id="PF04072">
    <property type="entry name" value="LCM"/>
    <property type="match status" value="1"/>
</dbReference>
<dbReference type="SUPFAM" id="SSF53335">
    <property type="entry name" value="S-adenosyl-L-methionine-dependent methyltransferases"/>
    <property type="match status" value="1"/>
</dbReference>